<sequence length="137" mass="14608">MTLMVRVITPDRTVWDAPSEEVILPATSGQLGILTGHAPLLTAIGNGVMRVKADGKWLAIAVMGGFAEVENNEVTVLVNRAERGEKVDKAAAQALLDEASKVLNTSSDKQERLQAKLDQQRARALIQAAEMGSKTGS</sequence>
<dbReference type="EMBL" id="CP000240">
    <property type="protein sequence ID" value="ABD03165.1"/>
    <property type="molecule type" value="Genomic_DNA"/>
</dbReference>
<dbReference type="RefSeq" id="WP_011433800.1">
    <property type="nucleotide sequence ID" value="NC_007776.1"/>
</dbReference>
<dbReference type="SMR" id="Q2JJK2"/>
<dbReference type="STRING" id="321332.CYB_2222"/>
<dbReference type="KEGG" id="cyb:CYB_2222"/>
<dbReference type="eggNOG" id="COG0355">
    <property type="taxonomic scope" value="Bacteria"/>
</dbReference>
<dbReference type="HOGENOM" id="CLU_084338_1_2_3"/>
<dbReference type="OrthoDB" id="9804110at2"/>
<dbReference type="Proteomes" id="UP000001938">
    <property type="component" value="Chromosome"/>
</dbReference>
<dbReference type="GO" id="GO:0031676">
    <property type="term" value="C:plasma membrane-derived thylakoid membrane"/>
    <property type="evidence" value="ECO:0007669"/>
    <property type="project" value="UniProtKB-SubCell"/>
</dbReference>
<dbReference type="GO" id="GO:0045259">
    <property type="term" value="C:proton-transporting ATP synthase complex"/>
    <property type="evidence" value="ECO:0007669"/>
    <property type="project" value="UniProtKB-KW"/>
</dbReference>
<dbReference type="GO" id="GO:0005524">
    <property type="term" value="F:ATP binding"/>
    <property type="evidence" value="ECO:0007669"/>
    <property type="project" value="UniProtKB-UniRule"/>
</dbReference>
<dbReference type="GO" id="GO:0046933">
    <property type="term" value="F:proton-transporting ATP synthase activity, rotational mechanism"/>
    <property type="evidence" value="ECO:0007669"/>
    <property type="project" value="UniProtKB-UniRule"/>
</dbReference>
<dbReference type="CDD" id="cd12152">
    <property type="entry name" value="F1-ATPase_delta"/>
    <property type="match status" value="1"/>
</dbReference>
<dbReference type="Gene3D" id="2.60.15.10">
    <property type="entry name" value="F0F1 ATP synthase delta/epsilon subunit, N-terminal"/>
    <property type="match status" value="1"/>
</dbReference>
<dbReference type="HAMAP" id="MF_00530">
    <property type="entry name" value="ATP_synth_epsil_bac"/>
    <property type="match status" value="1"/>
</dbReference>
<dbReference type="InterPro" id="IPR001469">
    <property type="entry name" value="ATP_synth_F1_dsu/esu"/>
</dbReference>
<dbReference type="InterPro" id="IPR020546">
    <property type="entry name" value="ATP_synth_F1_dsu/esu_N"/>
</dbReference>
<dbReference type="InterPro" id="IPR036771">
    <property type="entry name" value="ATPsynth_dsu/esu_N"/>
</dbReference>
<dbReference type="NCBIfam" id="TIGR01216">
    <property type="entry name" value="ATP_synt_epsi"/>
    <property type="match status" value="1"/>
</dbReference>
<dbReference type="NCBIfam" id="NF009977">
    <property type="entry name" value="PRK13442.1"/>
    <property type="match status" value="1"/>
</dbReference>
<dbReference type="PANTHER" id="PTHR13822">
    <property type="entry name" value="ATP SYNTHASE DELTA/EPSILON CHAIN"/>
    <property type="match status" value="1"/>
</dbReference>
<dbReference type="PANTHER" id="PTHR13822:SF10">
    <property type="entry name" value="ATP SYNTHASE EPSILON CHAIN, CHLOROPLASTIC"/>
    <property type="match status" value="1"/>
</dbReference>
<dbReference type="Pfam" id="PF02823">
    <property type="entry name" value="ATP-synt_DE_N"/>
    <property type="match status" value="1"/>
</dbReference>
<dbReference type="SUPFAM" id="SSF51344">
    <property type="entry name" value="Epsilon subunit of F1F0-ATP synthase N-terminal domain"/>
    <property type="match status" value="1"/>
</dbReference>
<proteinExistence type="inferred from homology"/>
<comment type="function">
    <text evidence="1">Produces ATP from ADP in the presence of a proton gradient across the membrane.</text>
</comment>
<comment type="subunit">
    <text>F-type ATPases have 2 components, CF(1) - the catalytic core - and CF(0) - the membrane proton channel. CF(1) has five subunits: alpha(3), beta(3), gamma(1), delta(1), epsilon(1). CF(0) has three main subunits: a, b and c.</text>
</comment>
<comment type="subcellular location">
    <subcellularLocation>
        <location evidence="1">Cellular thylakoid membrane</location>
        <topology evidence="1">Peripheral membrane protein</topology>
    </subcellularLocation>
</comment>
<comment type="similarity">
    <text evidence="1">Belongs to the ATPase epsilon chain family.</text>
</comment>
<reference key="1">
    <citation type="journal article" date="2007" name="ISME J.">
        <title>Population level functional diversity in a microbial community revealed by comparative genomic and metagenomic analyses.</title>
        <authorList>
            <person name="Bhaya D."/>
            <person name="Grossman A.R."/>
            <person name="Steunou A.-S."/>
            <person name="Khuri N."/>
            <person name="Cohan F.M."/>
            <person name="Hamamura N."/>
            <person name="Melendrez M.C."/>
            <person name="Bateson M.M."/>
            <person name="Ward D.M."/>
            <person name="Heidelberg J.F."/>
        </authorList>
    </citation>
    <scope>NUCLEOTIDE SEQUENCE [LARGE SCALE GENOMIC DNA]</scope>
    <source>
        <strain>JA-2-3B'a(2-13)</strain>
    </source>
</reference>
<feature type="chain" id="PRO_0000265912" description="ATP synthase epsilon chain">
    <location>
        <begin position="1"/>
        <end position="137"/>
    </location>
</feature>
<accession>Q2JJK2</accession>
<keyword id="KW-0066">ATP synthesis</keyword>
<keyword id="KW-0139">CF(1)</keyword>
<keyword id="KW-0375">Hydrogen ion transport</keyword>
<keyword id="KW-0406">Ion transport</keyword>
<keyword id="KW-0472">Membrane</keyword>
<keyword id="KW-1185">Reference proteome</keyword>
<keyword id="KW-0793">Thylakoid</keyword>
<keyword id="KW-0813">Transport</keyword>
<name>ATPE_SYNJB</name>
<organism>
    <name type="scientific">Synechococcus sp. (strain JA-2-3B'a(2-13))</name>
    <name type="common">Cyanobacteria bacterium Yellowstone B-Prime</name>
    <dbReference type="NCBI Taxonomy" id="321332"/>
    <lineage>
        <taxon>Bacteria</taxon>
        <taxon>Bacillati</taxon>
        <taxon>Cyanobacteriota</taxon>
        <taxon>Cyanophyceae</taxon>
        <taxon>Synechococcales</taxon>
        <taxon>Synechococcaceae</taxon>
        <taxon>Synechococcus</taxon>
    </lineage>
</organism>
<gene>
    <name evidence="1" type="primary">atpC</name>
    <name type="ordered locus">CYB_2222</name>
</gene>
<protein>
    <recommendedName>
        <fullName evidence="1">ATP synthase epsilon chain</fullName>
    </recommendedName>
    <alternativeName>
        <fullName evidence="1">ATP synthase F1 sector epsilon subunit</fullName>
    </alternativeName>
    <alternativeName>
        <fullName evidence="1">F-ATPase epsilon subunit</fullName>
    </alternativeName>
</protein>
<evidence type="ECO:0000255" key="1">
    <source>
        <dbReference type="HAMAP-Rule" id="MF_00530"/>
    </source>
</evidence>